<evidence type="ECO:0000255" key="1">
    <source>
        <dbReference type="HAMAP-Rule" id="MF_01393"/>
    </source>
</evidence>
<accession>Q07VT8</accession>
<dbReference type="EMBL" id="CP000447">
    <property type="protein sequence ID" value="ABI73876.1"/>
    <property type="molecule type" value="Genomic_DNA"/>
</dbReference>
<dbReference type="RefSeq" id="WP_011639456.1">
    <property type="nucleotide sequence ID" value="NC_008345.1"/>
</dbReference>
<dbReference type="SMR" id="Q07VT8"/>
<dbReference type="STRING" id="318167.Sfri_4051"/>
<dbReference type="KEGG" id="sfr:Sfri_4051"/>
<dbReference type="eggNOG" id="COG0356">
    <property type="taxonomic scope" value="Bacteria"/>
</dbReference>
<dbReference type="HOGENOM" id="CLU_041018_1_0_6"/>
<dbReference type="OrthoDB" id="9789241at2"/>
<dbReference type="Proteomes" id="UP000000684">
    <property type="component" value="Chromosome"/>
</dbReference>
<dbReference type="GO" id="GO:0005886">
    <property type="term" value="C:plasma membrane"/>
    <property type="evidence" value="ECO:0007669"/>
    <property type="project" value="UniProtKB-SubCell"/>
</dbReference>
<dbReference type="GO" id="GO:0045259">
    <property type="term" value="C:proton-transporting ATP synthase complex"/>
    <property type="evidence" value="ECO:0007669"/>
    <property type="project" value="UniProtKB-KW"/>
</dbReference>
<dbReference type="GO" id="GO:0046933">
    <property type="term" value="F:proton-transporting ATP synthase activity, rotational mechanism"/>
    <property type="evidence" value="ECO:0007669"/>
    <property type="project" value="UniProtKB-UniRule"/>
</dbReference>
<dbReference type="GO" id="GO:0042777">
    <property type="term" value="P:proton motive force-driven plasma membrane ATP synthesis"/>
    <property type="evidence" value="ECO:0007669"/>
    <property type="project" value="TreeGrafter"/>
</dbReference>
<dbReference type="CDD" id="cd00310">
    <property type="entry name" value="ATP-synt_Fo_a_6"/>
    <property type="match status" value="1"/>
</dbReference>
<dbReference type="FunFam" id="1.20.120.220:FF:000002">
    <property type="entry name" value="ATP synthase subunit a"/>
    <property type="match status" value="1"/>
</dbReference>
<dbReference type="Gene3D" id="1.20.120.220">
    <property type="entry name" value="ATP synthase, F0 complex, subunit A"/>
    <property type="match status" value="1"/>
</dbReference>
<dbReference type="HAMAP" id="MF_01393">
    <property type="entry name" value="ATP_synth_a_bact"/>
    <property type="match status" value="1"/>
</dbReference>
<dbReference type="InterPro" id="IPR045082">
    <property type="entry name" value="ATP_syn_F0_a_bact/chloroplast"/>
</dbReference>
<dbReference type="InterPro" id="IPR000568">
    <property type="entry name" value="ATP_synth_F0_asu"/>
</dbReference>
<dbReference type="InterPro" id="IPR023011">
    <property type="entry name" value="ATP_synth_F0_asu_AS"/>
</dbReference>
<dbReference type="InterPro" id="IPR035908">
    <property type="entry name" value="F0_ATP_A_sf"/>
</dbReference>
<dbReference type="NCBIfam" id="TIGR01131">
    <property type="entry name" value="ATP_synt_6_or_A"/>
    <property type="match status" value="1"/>
</dbReference>
<dbReference type="NCBIfam" id="NF004477">
    <property type="entry name" value="PRK05815.1-1"/>
    <property type="match status" value="1"/>
</dbReference>
<dbReference type="PANTHER" id="PTHR42823">
    <property type="entry name" value="ATP SYNTHASE SUBUNIT A, CHLOROPLASTIC"/>
    <property type="match status" value="1"/>
</dbReference>
<dbReference type="PANTHER" id="PTHR42823:SF3">
    <property type="entry name" value="ATP SYNTHASE SUBUNIT A, CHLOROPLASTIC"/>
    <property type="match status" value="1"/>
</dbReference>
<dbReference type="Pfam" id="PF00119">
    <property type="entry name" value="ATP-synt_A"/>
    <property type="match status" value="1"/>
</dbReference>
<dbReference type="PRINTS" id="PR00123">
    <property type="entry name" value="ATPASEA"/>
</dbReference>
<dbReference type="SUPFAM" id="SSF81336">
    <property type="entry name" value="F1F0 ATP synthase subunit A"/>
    <property type="match status" value="1"/>
</dbReference>
<dbReference type="PROSITE" id="PS00449">
    <property type="entry name" value="ATPASE_A"/>
    <property type="match status" value="1"/>
</dbReference>
<keyword id="KW-0066">ATP synthesis</keyword>
<keyword id="KW-0997">Cell inner membrane</keyword>
<keyword id="KW-1003">Cell membrane</keyword>
<keyword id="KW-0138">CF(0)</keyword>
<keyword id="KW-0375">Hydrogen ion transport</keyword>
<keyword id="KW-0406">Ion transport</keyword>
<keyword id="KW-0472">Membrane</keyword>
<keyword id="KW-1185">Reference proteome</keyword>
<keyword id="KW-0812">Transmembrane</keyword>
<keyword id="KW-1133">Transmembrane helix</keyword>
<keyword id="KW-0813">Transport</keyword>
<organism>
    <name type="scientific">Shewanella frigidimarina (strain NCIMB 400)</name>
    <dbReference type="NCBI Taxonomy" id="318167"/>
    <lineage>
        <taxon>Bacteria</taxon>
        <taxon>Pseudomonadati</taxon>
        <taxon>Pseudomonadota</taxon>
        <taxon>Gammaproteobacteria</taxon>
        <taxon>Alteromonadales</taxon>
        <taxon>Shewanellaceae</taxon>
        <taxon>Shewanella</taxon>
    </lineage>
</organism>
<feature type="chain" id="PRO_0000362452" description="ATP synthase subunit a">
    <location>
        <begin position="1"/>
        <end position="264"/>
    </location>
</feature>
<feature type="transmembrane region" description="Helical" evidence="1">
    <location>
        <begin position="30"/>
        <end position="50"/>
    </location>
</feature>
<feature type="transmembrane region" description="Helical" evidence="1">
    <location>
        <begin position="90"/>
        <end position="110"/>
    </location>
</feature>
<feature type="transmembrane region" description="Helical" evidence="1">
    <location>
        <begin position="111"/>
        <end position="131"/>
    </location>
</feature>
<feature type="transmembrane region" description="Helical" evidence="1">
    <location>
        <begin position="134"/>
        <end position="154"/>
    </location>
</feature>
<feature type="transmembrane region" description="Helical" evidence="1">
    <location>
        <begin position="177"/>
        <end position="197"/>
    </location>
</feature>
<feature type="transmembrane region" description="Helical" evidence="1">
    <location>
        <begin position="208"/>
        <end position="228"/>
    </location>
</feature>
<feature type="transmembrane region" description="Helical" evidence="1">
    <location>
        <begin position="235"/>
        <end position="255"/>
    </location>
</feature>
<protein>
    <recommendedName>
        <fullName evidence="1">ATP synthase subunit a</fullName>
    </recommendedName>
    <alternativeName>
        <fullName evidence="1">ATP synthase F0 sector subunit a</fullName>
    </alternativeName>
    <alternativeName>
        <fullName evidence="1">F-ATPase subunit 6</fullName>
    </alternativeName>
</protein>
<reference key="1">
    <citation type="submission" date="2006-08" db="EMBL/GenBank/DDBJ databases">
        <title>Complete sequence of Shewanella frigidimarina NCIMB 400.</title>
        <authorList>
            <consortium name="US DOE Joint Genome Institute"/>
            <person name="Copeland A."/>
            <person name="Lucas S."/>
            <person name="Lapidus A."/>
            <person name="Barry K."/>
            <person name="Detter J.C."/>
            <person name="Glavina del Rio T."/>
            <person name="Hammon N."/>
            <person name="Israni S."/>
            <person name="Dalin E."/>
            <person name="Tice H."/>
            <person name="Pitluck S."/>
            <person name="Fredrickson J.K."/>
            <person name="Kolker E."/>
            <person name="McCuel L.A."/>
            <person name="DiChristina T."/>
            <person name="Nealson K.H."/>
            <person name="Newman D."/>
            <person name="Tiedje J.M."/>
            <person name="Zhou J."/>
            <person name="Romine M.F."/>
            <person name="Culley D.E."/>
            <person name="Serres M."/>
            <person name="Chertkov O."/>
            <person name="Brettin T."/>
            <person name="Bruce D."/>
            <person name="Han C."/>
            <person name="Tapia R."/>
            <person name="Gilna P."/>
            <person name="Schmutz J."/>
            <person name="Larimer F."/>
            <person name="Land M."/>
            <person name="Hauser L."/>
            <person name="Kyrpides N."/>
            <person name="Mikhailova N."/>
            <person name="Richardson P."/>
        </authorList>
    </citation>
    <scope>NUCLEOTIDE SEQUENCE [LARGE SCALE GENOMIC DNA]</scope>
    <source>
        <strain>NCIMB 400</strain>
    </source>
</reference>
<name>ATP6_SHEFN</name>
<proteinExistence type="inferred from homology"/>
<comment type="function">
    <text evidence="1">Key component of the proton channel; it plays a direct role in the translocation of protons across the membrane.</text>
</comment>
<comment type="subunit">
    <text evidence="1">F-type ATPases have 2 components, CF(1) - the catalytic core - and CF(0) - the membrane proton channel. CF(1) has five subunits: alpha(3), beta(3), gamma(1), delta(1), epsilon(1). CF(0) has three main subunits: a(1), b(2) and c(9-12). The alpha and beta chains form an alternating ring which encloses part of the gamma chain. CF(1) is attached to CF(0) by a central stalk formed by the gamma and epsilon chains, while a peripheral stalk is formed by the delta and b chains.</text>
</comment>
<comment type="subcellular location">
    <subcellularLocation>
        <location evidence="1">Cell inner membrane</location>
        <topology evidence="1">Multi-pass membrane protein</topology>
    </subcellularLocation>
</comment>
<comment type="similarity">
    <text evidence="1">Belongs to the ATPase A chain family.</text>
</comment>
<gene>
    <name evidence="1" type="primary">atpB</name>
    <name type="ordered locus">Sfri_4051</name>
</gene>
<sequence length="264" mass="29564">MSATGEEMTQQSYIQHHLTNLTVGEGFWTWNIDSLLFSVGLGMLFLWLFYRAGKKATTGVPGKFQCFVEIIVEFVDSSVKETFHGRNPVIAPLALTIFVWIFMMNFMDMIPVDWLPSLALLAGVPYLKVVPTTDVNITFSLALGVFVLIIYYSIKVKGVSGFVKELTFQPFNHWAMIPVNLLLETVTLVAKPISLALRLFGNLYAGELIFILIALMYGSNVALSALGVGLQLGWLIFHILVITLQAFIFMMLTIVYLSMAHEDH</sequence>